<sequence>MRGGGFGDRDRDRDRGGFGARGGSGLPPKKFGNPGERLRKKKWDLSELPKFEKNFYVEHPEVARLTPYEVDELRRKKEITVRGGDVCPKPVFAFHHANFPQYVMDVLMDQHFTEPTPIQCQGFPLALSGRDMVGIAQTGSGKTLAYLLPAIVHINHQPYLERGDGPICLVLAPTRELAQQVQQVADDYGKCSRLKSTCIYGGAPKGPQIRDLERGVEICIATPGRLIDFLESGKTNLRRCTYLVLDEADRMLDMGFEPQIRKIVDQIRPDRQTLMWSATWPKEVRQLAEDFLRDYTQINVGNLELSANHNILQIVDVCMESEKDHKLIQLMEEIMAEKENKTIIFVETKRRCDDLTRRMRRDGWPAMCIHGDKSQPERDWVLNEFRSGKAPILIATDVASRGLDVEDVKFVINYDYPNSSEDYVHRIGRTARSTNKGTAYTFFTPGNLKQARELIKVLEEANQAINPKLMQLVDHRGGGGGGGGRSRYRTTSSANNPNLMYQDECDRRLRGVKDGGRRDSTSYRDRSETDRASYANGSGYGSPNSAFGAQAGQYTYAQGTYGAAAYGTSGYTAQEYAAGTYGASSTASAGRSSQSSSQQFSGIGRSGQQPQPLMSQQFAQPPGATNMIGYMGQTAYQYPPPPPPPPPSRK</sequence>
<organism>
    <name type="scientific">Mus musculus</name>
    <name type="common">Mouse</name>
    <dbReference type="NCBI Taxonomy" id="10090"/>
    <lineage>
        <taxon>Eukaryota</taxon>
        <taxon>Metazoa</taxon>
        <taxon>Chordata</taxon>
        <taxon>Craniata</taxon>
        <taxon>Vertebrata</taxon>
        <taxon>Euteleostomi</taxon>
        <taxon>Mammalia</taxon>
        <taxon>Eutheria</taxon>
        <taxon>Euarchontoglires</taxon>
        <taxon>Glires</taxon>
        <taxon>Rodentia</taxon>
        <taxon>Myomorpha</taxon>
        <taxon>Muroidea</taxon>
        <taxon>Muridae</taxon>
        <taxon>Murinae</taxon>
        <taxon>Mus</taxon>
        <taxon>Mus</taxon>
    </lineage>
</organism>
<feature type="chain" id="PRO_0000054994" description="Probable ATP-dependent RNA helicase DDX17">
    <location>
        <begin position="1"/>
        <end position="650"/>
    </location>
</feature>
<feature type="domain" description="Helicase ATP-binding" evidence="3">
    <location>
        <begin position="123"/>
        <end position="298"/>
    </location>
</feature>
<feature type="domain" description="Helicase C-terminal" evidence="4">
    <location>
        <begin position="326"/>
        <end position="473"/>
    </location>
</feature>
<feature type="region of interest" description="Disordered" evidence="5">
    <location>
        <begin position="1"/>
        <end position="38"/>
    </location>
</feature>
<feature type="region of interest" description="Transactivation domain" evidence="1">
    <location>
        <begin position="468"/>
        <end position="650"/>
    </location>
</feature>
<feature type="region of interest" description="Disordered" evidence="5">
    <location>
        <begin position="472"/>
        <end position="543"/>
    </location>
</feature>
<feature type="region of interest" description="Disordered" evidence="5">
    <location>
        <begin position="583"/>
        <end position="650"/>
    </location>
</feature>
<feature type="region of interest" description="Interaction with YAP1" evidence="2">
    <location>
        <begin position="639"/>
        <end position="647"/>
    </location>
</feature>
<feature type="short sequence motif" description="Q motif">
    <location>
        <begin position="92"/>
        <end position="120"/>
    </location>
</feature>
<feature type="short sequence motif" description="DEAD box">
    <location>
        <begin position="246"/>
        <end position="249"/>
    </location>
</feature>
<feature type="compositionally biased region" description="Basic and acidic residues" evidence="5">
    <location>
        <begin position="7"/>
        <end position="16"/>
    </location>
</feature>
<feature type="compositionally biased region" description="Polar residues" evidence="5">
    <location>
        <begin position="489"/>
        <end position="499"/>
    </location>
</feature>
<feature type="compositionally biased region" description="Basic and acidic residues" evidence="5">
    <location>
        <begin position="504"/>
        <end position="531"/>
    </location>
</feature>
<feature type="compositionally biased region" description="Low complexity" evidence="5">
    <location>
        <begin position="583"/>
        <end position="609"/>
    </location>
</feature>
<feature type="compositionally biased region" description="Polar residues" evidence="5">
    <location>
        <begin position="610"/>
        <end position="619"/>
    </location>
</feature>
<feature type="compositionally biased region" description="Pro residues" evidence="5">
    <location>
        <begin position="638"/>
        <end position="650"/>
    </location>
</feature>
<feature type="binding site" evidence="3">
    <location>
        <begin position="136"/>
        <end position="143"/>
    </location>
    <ligand>
        <name>ATP</name>
        <dbReference type="ChEBI" id="CHEBI:30616"/>
    </ligand>
</feature>
<feature type="modified residue" description="N6-acetyllysine" evidence="2">
    <location>
        <position position="29"/>
    </location>
</feature>
<feature type="modified residue" description="N6-acetyllysine" evidence="2">
    <location>
        <position position="30"/>
    </location>
</feature>
<feature type="modified residue" description="N6-acetyllysine" evidence="2">
    <location>
        <position position="42"/>
    </location>
</feature>
<feature type="modified residue" description="Phosphothreonine" evidence="2">
    <location>
        <position position="444"/>
    </location>
</feature>
<feature type="modified residue" description="Omega-N-methylarginine" evidence="11">
    <location>
        <position position="605"/>
    </location>
</feature>
<feature type="cross-link" description="Glycyl lysine isopeptide (Lys-Gly) (interchain with G-Cter in SUMO); alternate" evidence="1">
    <location>
        <position position="50"/>
    </location>
</feature>
<feature type="cross-link" description="Glycyl lysine isopeptide (Lys-Gly) (interchain with G-Cter in SUMO1); alternate" evidence="2">
    <location>
        <position position="50"/>
    </location>
</feature>
<feature type="cross-link" description="Glycyl lysine isopeptide (Lys-Gly) (interchain with G-Cter in SUMO2); alternate" evidence="2">
    <location>
        <position position="50"/>
    </location>
</feature>
<feature type="cross-link" description="Glycyl lysine isopeptide (Lys-Gly) (interchain with G-Cter in SUMO2)" evidence="2">
    <location>
        <position position="449"/>
    </location>
</feature>
<feature type="splice variant" id="VSP_015780" description="In isoform 2." evidence="8 9">
    <original>DVED</original>
    <variation>GLYR</variation>
    <location>
        <begin position="404"/>
        <end position="407"/>
    </location>
</feature>
<feature type="splice variant" id="VSP_015781" description="In isoform 2." evidence="8 9">
    <location>
        <begin position="408"/>
        <end position="650"/>
    </location>
</feature>
<feature type="sequence conflict" description="In Ref. 2; AAH62910." evidence="10" ref="2">
    <original>E</original>
    <variation>V</variation>
    <location>
        <position position="320"/>
    </location>
</feature>
<feature type="sequence conflict" description="In Ref. 2; AAH62910." evidence="10" ref="2">
    <original>D</original>
    <variation>Y</variation>
    <location>
        <position position="362"/>
    </location>
</feature>
<accession>Q501J6</accession>
<accession>Q6P5G1</accession>
<accession>Q8BIN2</accession>
<reference key="1">
    <citation type="journal article" date="2005" name="Science">
        <title>The transcriptional landscape of the mammalian genome.</title>
        <authorList>
            <person name="Carninci P."/>
            <person name="Kasukawa T."/>
            <person name="Katayama S."/>
            <person name="Gough J."/>
            <person name="Frith M.C."/>
            <person name="Maeda N."/>
            <person name="Oyama R."/>
            <person name="Ravasi T."/>
            <person name="Lenhard B."/>
            <person name="Wells C."/>
            <person name="Kodzius R."/>
            <person name="Shimokawa K."/>
            <person name="Bajic V.B."/>
            <person name="Brenner S.E."/>
            <person name="Batalov S."/>
            <person name="Forrest A.R."/>
            <person name="Zavolan M."/>
            <person name="Davis M.J."/>
            <person name="Wilming L.G."/>
            <person name="Aidinis V."/>
            <person name="Allen J.E."/>
            <person name="Ambesi-Impiombato A."/>
            <person name="Apweiler R."/>
            <person name="Aturaliya R.N."/>
            <person name="Bailey T.L."/>
            <person name="Bansal M."/>
            <person name="Baxter L."/>
            <person name="Beisel K.W."/>
            <person name="Bersano T."/>
            <person name="Bono H."/>
            <person name="Chalk A.M."/>
            <person name="Chiu K.P."/>
            <person name="Choudhary V."/>
            <person name="Christoffels A."/>
            <person name="Clutterbuck D.R."/>
            <person name="Crowe M.L."/>
            <person name="Dalla E."/>
            <person name="Dalrymple B.P."/>
            <person name="de Bono B."/>
            <person name="Della Gatta G."/>
            <person name="di Bernardo D."/>
            <person name="Down T."/>
            <person name="Engstrom P."/>
            <person name="Fagiolini M."/>
            <person name="Faulkner G."/>
            <person name="Fletcher C.F."/>
            <person name="Fukushima T."/>
            <person name="Furuno M."/>
            <person name="Futaki S."/>
            <person name="Gariboldi M."/>
            <person name="Georgii-Hemming P."/>
            <person name="Gingeras T.R."/>
            <person name="Gojobori T."/>
            <person name="Green R.E."/>
            <person name="Gustincich S."/>
            <person name="Harbers M."/>
            <person name="Hayashi Y."/>
            <person name="Hensch T.K."/>
            <person name="Hirokawa N."/>
            <person name="Hill D."/>
            <person name="Huminiecki L."/>
            <person name="Iacono M."/>
            <person name="Ikeo K."/>
            <person name="Iwama A."/>
            <person name="Ishikawa T."/>
            <person name="Jakt M."/>
            <person name="Kanapin A."/>
            <person name="Katoh M."/>
            <person name="Kawasawa Y."/>
            <person name="Kelso J."/>
            <person name="Kitamura H."/>
            <person name="Kitano H."/>
            <person name="Kollias G."/>
            <person name="Krishnan S.P."/>
            <person name="Kruger A."/>
            <person name="Kummerfeld S.K."/>
            <person name="Kurochkin I.V."/>
            <person name="Lareau L.F."/>
            <person name="Lazarevic D."/>
            <person name="Lipovich L."/>
            <person name="Liu J."/>
            <person name="Liuni S."/>
            <person name="McWilliam S."/>
            <person name="Madan Babu M."/>
            <person name="Madera M."/>
            <person name="Marchionni L."/>
            <person name="Matsuda H."/>
            <person name="Matsuzawa S."/>
            <person name="Miki H."/>
            <person name="Mignone F."/>
            <person name="Miyake S."/>
            <person name="Morris K."/>
            <person name="Mottagui-Tabar S."/>
            <person name="Mulder N."/>
            <person name="Nakano N."/>
            <person name="Nakauchi H."/>
            <person name="Ng P."/>
            <person name="Nilsson R."/>
            <person name="Nishiguchi S."/>
            <person name="Nishikawa S."/>
            <person name="Nori F."/>
            <person name="Ohara O."/>
            <person name="Okazaki Y."/>
            <person name="Orlando V."/>
            <person name="Pang K.C."/>
            <person name="Pavan W.J."/>
            <person name="Pavesi G."/>
            <person name="Pesole G."/>
            <person name="Petrovsky N."/>
            <person name="Piazza S."/>
            <person name="Reed J."/>
            <person name="Reid J.F."/>
            <person name="Ring B.Z."/>
            <person name="Ringwald M."/>
            <person name="Rost B."/>
            <person name="Ruan Y."/>
            <person name="Salzberg S.L."/>
            <person name="Sandelin A."/>
            <person name="Schneider C."/>
            <person name="Schoenbach C."/>
            <person name="Sekiguchi K."/>
            <person name="Semple C.A."/>
            <person name="Seno S."/>
            <person name="Sessa L."/>
            <person name="Sheng Y."/>
            <person name="Shibata Y."/>
            <person name="Shimada H."/>
            <person name="Shimada K."/>
            <person name="Silva D."/>
            <person name="Sinclair B."/>
            <person name="Sperling S."/>
            <person name="Stupka E."/>
            <person name="Sugiura K."/>
            <person name="Sultana R."/>
            <person name="Takenaka Y."/>
            <person name="Taki K."/>
            <person name="Tammoja K."/>
            <person name="Tan S.L."/>
            <person name="Tang S."/>
            <person name="Taylor M.S."/>
            <person name="Tegner J."/>
            <person name="Teichmann S.A."/>
            <person name="Ueda H.R."/>
            <person name="van Nimwegen E."/>
            <person name="Verardo R."/>
            <person name="Wei C.L."/>
            <person name="Yagi K."/>
            <person name="Yamanishi H."/>
            <person name="Zabarovsky E."/>
            <person name="Zhu S."/>
            <person name="Zimmer A."/>
            <person name="Hide W."/>
            <person name="Bult C."/>
            <person name="Grimmond S.M."/>
            <person name="Teasdale R.D."/>
            <person name="Liu E.T."/>
            <person name="Brusic V."/>
            <person name="Quackenbush J."/>
            <person name="Wahlestedt C."/>
            <person name="Mattick J.S."/>
            <person name="Hume D.A."/>
            <person name="Kai C."/>
            <person name="Sasaki D."/>
            <person name="Tomaru Y."/>
            <person name="Fukuda S."/>
            <person name="Kanamori-Katayama M."/>
            <person name="Suzuki M."/>
            <person name="Aoki J."/>
            <person name="Arakawa T."/>
            <person name="Iida J."/>
            <person name="Imamura K."/>
            <person name="Itoh M."/>
            <person name="Kato T."/>
            <person name="Kawaji H."/>
            <person name="Kawagashira N."/>
            <person name="Kawashima T."/>
            <person name="Kojima M."/>
            <person name="Kondo S."/>
            <person name="Konno H."/>
            <person name="Nakano K."/>
            <person name="Ninomiya N."/>
            <person name="Nishio T."/>
            <person name="Okada M."/>
            <person name="Plessy C."/>
            <person name="Shibata K."/>
            <person name="Shiraki T."/>
            <person name="Suzuki S."/>
            <person name="Tagami M."/>
            <person name="Waki K."/>
            <person name="Watahiki A."/>
            <person name="Okamura-Oho Y."/>
            <person name="Suzuki H."/>
            <person name="Kawai J."/>
            <person name="Hayashizaki Y."/>
        </authorList>
    </citation>
    <scope>NUCLEOTIDE SEQUENCE [LARGE SCALE MRNA] (ISOFORM 2)</scope>
    <source>
        <strain>C57BL/6J</strain>
        <tissue>Thymus</tissue>
    </source>
</reference>
<reference key="2">
    <citation type="journal article" date="2004" name="Genome Res.">
        <title>The status, quality, and expansion of the NIH full-length cDNA project: the Mammalian Gene Collection (MGC).</title>
        <authorList>
            <consortium name="The MGC Project Team"/>
        </authorList>
    </citation>
    <scope>NUCLEOTIDE SEQUENCE [LARGE SCALE MRNA] (ISOFORMS 1 AND 2)</scope>
    <source>
        <strain>C57BL/6J</strain>
        <tissue>Brain</tissue>
        <tissue>Eye</tissue>
    </source>
</reference>
<reference key="3">
    <citation type="journal article" date="2006" name="Dev. Cell">
        <title>The RNA helicases p68/p72 and the noncoding RNA SRA are coregulators of MyoD and skeletal muscle differentiation.</title>
        <authorList>
            <person name="Caretti G."/>
            <person name="Schiltz R.L."/>
            <person name="Dilworth F.J."/>
            <person name="Di Padova M."/>
            <person name="Zhao P."/>
            <person name="Ogryzko V."/>
            <person name="Fuller-Pace F.V."/>
            <person name="Hoffman E.P."/>
            <person name="Tapscott S.J."/>
            <person name="Sartorelli V."/>
        </authorList>
    </citation>
    <scope>FUNCTION</scope>
    <scope>INTERACTION WITH MYOD1</scope>
</reference>
<reference key="4">
    <citation type="journal article" date="2010" name="Cell">
        <title>A tissue-specific atlas of mouse protein phosphorylation and expression.</title>
        <authorList>
            <person name="Huttlin E.L."/>
            <person name="Jedrychowski M.P."/>
            <person name="Elias J.E."/>
            <person name="Goswami T."/>
            <person name="Rad R."/>
            <person name="Beausoleil S.A."/>
            <person name="Villen J."/>
            <person name="Haas W."/>
            <person name="Sowa M.E."/>
            <person name="Gygi S.P."/>
        </authorList>
    </citation>
    <scope>IDENTIFICATION BY MASS SPECTROMETRY [LARGE SCALE ANALYSIS]</scope>
    <source>
        <tissue>Brain</tissue>
        <tissue>Brown adipose tissue</tissue>
        <tissue>Kidney</tissue>
        <tissue>Lung</tissue>
        <tissue>Pancreas</tissue>
        <tissue>Spleen</tissue>
        <tissue>Testis</tissue>
    </source>
</reference>
<reference key="5">
    <citation type="journal article" date="2012" name="Nat. Struct. Mol. Biol.">
        <title>Splicing switch of an epigenetic regulator by RNA helicases promotes tumor-cell invasiveness.</title>
        <authorList>
            <person name="Dardenne E."/>
            <person name="Pierredon S."/>
            <person name="Driouch K."/>
            <person name="Gratadou L."/>
            <person name="Lacroix-Triki M."/>
            <person name="Espinoza M.P."/>
            <person name="Zonta E."/>
            <person name="Germann S."/>
            <person name="Mortada H."/>
            <person name="Villemin J.P."/>
            <person name="Dutertre M."/>
            <person name="Lidereau R."/>
            <person name="Vagner S."/>
            <person name="Auboeuf D."/>
        </authorList>
    </citation>
    <scope>FUNCTION IN ALTERNATIVE SPLICING</scope>
</reference>
<reference key="6">
    <citation type="journal article" date="2014" name="Mol. Cell. Proteomics">
        <title>Immunoaffinity enrichment and mass spectrometry analysis of protein methylation.</title>
        <authorList>
            <person name="Guo A."/>
            <person name="Gu H."/>
            <person name="Zhou J."/>
            <person name="Mulhern D."/>
            <person name="Wang Y."/>
            <person name="Lee K.A."/>
            <person name="Yang V."/>
            <person name="Aguiar M."/>
            <person name="Kornhauser J."/>
            <person name="Jia X."/>
            <person name="Ren J."/>
            <person name="Beausoleil S.A."/>
            <person name="Silva J.C."/>
            <person name="Vemulapalli V."/>
            <person name="Bedford M.T."/>
            <person name="Comb M.J."/>
        </authorList>
    </citation>
    <scope>METHYLATION [LARGE SCALE ANALYSIS] AT ARG-605</scope>
    <scope>IDENTIFICATION BY MASS SPECTROMETRY [LARGE SCALE ANALYSIS]</scope>
    <source>
        <tissue>Brain</tissue>
        <tissue>Embryo</tissue>
    </source>
</reference>
<reference key="7">
    <citation type="journal article" date="2016" name="Sci. Rep.">
        <title>The loop structure and the RNA helicase p72/DDX17 influence the processing efficiency of the mice miR-132.</title>
        <authorList>
            <person name="Remenyi J."/>
            <person name="Bajan S."/>
            <person name="Fuller-Pace F.V."/>
            <person name="Arthur J.S."/>
            <person name="Hutvagner G."/>
        </authorList>
    </citation>
    <scope>FUNCTION</scope>
</reference>
<comment type="function">
    <text evidence="2 6 7">As an RNA helicase, unwinds RNA and alters RNA structures through ATP binding and hydrolysis. Involved in multiple cellular processes, including pre-mRNA splicing, alternative splicing, ribosomal RNA processing and miRNA processing, as well as transcription regulation. Regulates the alternative splicing of exons exhibiting specific features. This function requires the RNA helicase activity. Affects NFAT5 and histone macro-H2A.1/MACROH2A1 alternative splicing in a CDK9-dependent manner. Affects splicing of mediators of steroid hormone signaling pathway, including kinases that phosphorylates ESR1 and transcriptional regulators. By acting splicing of regulatory factors, participates in ESR1 and AR stabilization. Promotes the inclusion of specific AC-rich alternative exons in CD44 transcripts. In myoblasts and epithelial cells, cooperates with HNRNPH1 to control the splicing of specific subsets of exons. In addition to binding mature mRNAs, also interacts with certain pri-microRNAs, including MIR132/miR-132, and stabilizes the primary transcript. Also participates in the MIR132 processing, resulting in significantly higher levels of mature MIR132 than MIR212 despite the fact that both are cotranscribed and co-regulated (PubMed:26947125). Binding of pri-microRNAs may occur on the 3' segment flanking the stem loop via the 5'-[ACG]CAUC[ACU]-3' consensus sequence (By similarity). Participates in MYC down-regulation at high cell density through the production of MYC-targeting microRNAs. Along with DDX5, may be involved in the processing of the 32S intermediate into the mature 28S rRNA. Promoter-specific transcription regulator, functioning as a coactivator or corepressor depending on the context of the promoter and the transcriptional complex in which it exists. Enhances NFAT5 transcriptional activity. Synergizes with TP53 in the activation of the MDM2 promoter; this activity requires acetylation on lysine residues. May also coactivate MDM2 transcription through a TP53-independent pathway. Coactivates MMP7 transcription. Along with CTNNB1, coactivates MYC, JUN, FOSL1 and cyclin D1/CCND1 transcription. Alone or in combination with DDX5 and/or SRA1 non-coding RNA, plays a critical role in promoting the assembly of proteins required for the formation of the transcription initiation complex and chromatin remodeling leading to coactivation of MYOD1-dependent transcription. This helicase-independent activity is required for skeletal muscle cells to properly differentiate into myotubes (PubMed:17011493). During epithelial-to-mesenchymal transition, coregulates SMAD-dependent transcriptional activity, directly controlling key effectors of differentiation, including miRNAs which in turn directly repress its expression. Plays a role in estrogen and testosterone signaling pathway at several levels. Mediates the use of alternative promoters in estrogen-responsive genes and regulates transcription and splicing of a large number of steroid hormone target genes. Contrary to the splicing regulation activity, transcriptional coregulation of the estrogen receptor ESR1 is helicase activity-independent. Plays a role in innate immunity. Specifically restricts bunyavirus infection, including Rift Valley fever virus (RVFV) or La Crosse virus (LACV), but not vesicular stomatitis virus (VSV), in an interferon- and DROSHA-independent manner. Binds to RVFV RNA, likely via structured viral RNA elements (By similarity). Promotes mRNA degradation mediated by the antiviral zinc-finger protein ZC3HAV1, in an ATPase-dependent manner (By similarity).</text>
</comment>
<comment type="catalytic activity">
    <reaction evidence="2">
        <text>ATP + H2O = ADP + phosphate + H(+)</text>
        <dbReference type="Rhea" id="RHEA:13065"/>
        <dbReference type="ChEBI" id="CHEBI:15377"/>
        <dbReference type="ChEBI" id="CHEBI:15378"/>
        <dbReference type="ChEBI" id="CHEBI:30616"/>
        <dbReference type="ChEBI" id="CHEBI:43474"/>
        <dbReference type="ChEBI" id="CHEBI:456216"/>
        <dbReference type="EC" id="3.6.4.13"/>
    </reaction>
</comment>
<comment type="subunit">
    <text evidence="2 6">Interacts with DDX5 in an RNA-independent manner (By similarity). Interacts with CDK9 transcription elongation complex under basal conditions. Following cell stimulation with poly(I:C), a synthetic double-stranded RNA mimicking viral infection, the interaction with CDK9 is decreased (By similarity). Interacts with ESR1 in an estrogen-independent manner (By similarity). Interacts with HNRNPH1; this interaction is important for the regulation of alternative splicing on G-quadruplex structures (By similarity). At high, but not low, cell density, interacts with DROSHA and DGCR8, the core components of the microprocessor complex involved in the maturation of primary microRNAs (pri-miRNAs) into pre-miRNAs. The interaction with DGCR8 is reduced during mitosis. At low, but not high, cell density, interacts with YAP1 and with its paralog, WWTR1/TAZ. Interactions with DROSHA and YAP1 are mutually exclusive. In vitro, the pre-miRNA processing activity of the DDX17-containing microprocessor complex is weaker than that of the DROSHA/DGCR8 microprocessor complex (By similarity). Interacts with UPF3B (By similarity). Interacts with NFAT5; this interaction leads to DDX17 recruitment to LNC2 and S100A4 promoters and NFAT5-mediated DDX17-enhanced transactivation (By similarity). Interacts with HDAC1, HDAC2 and HDAC3; this interaction with HDAC1 and HDAC3, but not HDAC2, depends upon DDX17 acetylation (By similarity). Interacts with ZC3HAV1 (via N-terminal domain) in an RNA-independent manner. Interacts with EXOSC3/RRP40 and EXOSC5/RRP46; this interaction may be indirect and mediated by ZC3HAV1-binding (By similarity). Interacts with EP300; this interaction leads to acetylation at lysine residues (By similarity). Interacts with CREBBP/CBP and KAT2B/P/CAF (By similarity). Directly interacts with CTNNB1 (By similarity). Interacts with MYOD1 (PubMed:17011493). Interacts with TP53 (By similarity). Interacts with DCP1A in an RNA-independent manner. Interacts with DCP2 in an RNA-dependent manner (By similarity). Interacts with DHX36; this interaction occurs in a RNA-dependent manner (By similarity). Interacts with ERCC6 (By similarity).</text>
</comment>
<comment type="interaction">
    <interactant intactId="EBI-911206">
        <id>Q501J6</id>
    </interactant>
    <interactant intactId="EBI-1211949">
        <id>P46938</id>
        <label>Yap1</label>
    </interactant>
    <organismsDiffer>false</organismsDiffer>
    <experiments>3</experiments>
</comment>
<comment type="subcellular location">
    <subcellularLocation>
        <location evidence="2">Nucleus</location>
    </subcellularLocation>
    <subcellularLocation>
        <location evidence="2">Nucleus</location>
        <location evidence="2">Nucleolus</location>
    </subcellularLocation>
    <subcellularLocation>
        <location evidence="2">Cytoplasm</location>
        <location evidence="2">Cytosol</location>
    </subcellularLocation>
    <text evidence="2">In the course of bunyavirus infection, relocalizes from the nucleus to the cytosol where it binds viral RNA to antagonize replication.</text>
</comment>
<comment type="alternative products">
    <event type="alternative splicing"/>
    <isoform>
        <id>Q501J6-1</id>
        <name>1</name>
        <sequence type="displayed"/>
    </isoform>
    <isoform>
        <id>Q501J6-2</id>
        <name>2</name>
        <sequence type="described" ref="VSP_015780 VSP_015781"/>
    </isoform>
</comment>
<comment type="PTM">
    <text evidence="2">Sumoylation significantly increases stability. It also promotes interaction specifically with HDAC1 (but not HDAC2, nor HDAC3) and strongly stimulates ESR1 and TP53 coactivation.</text>
</comment>
<comment type="PTM">
    <text evidence="2">Acetylation at lysine residues stabilizes the protein, stimulates interaction with HDAC1 and HDAC3, but not HDAC2, and represses ESR1 and TP53 coactivation activity.</text>
</comment>
<comment type="similarity">
    <text evidence="10">Belongs to the DEAD box helicase family. DDX5/DBP2 subfamily.</text>
</comment>
<protein>
    <recommendedName>
        <fullName>Probable ATP-dependent RNA helicase DDX17</fullName>
        <ecNumber>3.6.4.13</ecNumber>
    </recommendedName>
    <alternativeName>
        <fullName>DEAD box protein 17</fullName>
    </alternativeName>
</protein>
<gene>
    <name type="primary">Ddx17</name>
</gene>
<keyword id="KW-0007">Acetylation</keyword>
<keyword id="KW-0025">Alternative splicing</keyword>
<keyword id="KW-0051">Antiviral defense</keyword>
<keyword id="KW-0067">ATP-binding</keyword>
<keyword id="KW-0963">Cytoplasm</keyword>
<keyword id="KW-0347">Helicase</keyword>
<keyword id="KW-0378">Hydrolase</keyword>
<keyword id="KW-0391">Immunity</keyword>
<keyword id="KW-1017">Isopeptide bond</keyword>
<keyword id="KW-0488">Methylation</keyword>
<keyword id="KW-0507">mRNA processing</keyword>
<keyword id="KW-0508">mRNA splicing</keyword>
<keyword id="KW-0547">Nucleotide-binding</keyword>
<keyword id="KW-0539">Nucleus</keyword>
<keyword id="KW-0597">Phosphoprotein</keyword>
<keyword id="KW-1185">Reference proteome</keyword>
<keyword id="KW-0694">RNA-binding</keyword>
<keyword id="KW-0943">RNA-mediated gene silencing</keyword>
<keyword id="KW-0698">rRNA processing</keyword>
<keyword id="KW-0804">Transcription</keyword>
<keyword id="KW-0805">Transcription regulation</keyword>
<keyword id="KW-0832">Ubl conjugation</keyword>
<name>DDX17_MOUSE</name>
<evidence type="ECO:0000250" key="1"/>
<evidence type="ECO:0000250" key="2">
    <source>
        <dbReference type="UniProtKB" id="Q92841"/>
    </source>
</evidence>
<evidence type="ECO:0000255" key="3">
    <source>
        <dbReference type="PROSITE-ProRule" id="PRU00541"/>
    </source>
</evidence>
<evidence type="ECO:0000255" key="4">
    <source>
        <dbReference type="PROSITE-ProRule" id="PRU00542"/>
    </source>
</evidence>
<evidence type="ECO:0000256" key="5">
    <source>
        <dbReference type="SAM" id="MobiDB-lite"/>
    </source>
</evidence>
<evidence type="ECO:0000269" key="6">
    <source>
    </source>
</evidence>
<evidence type="ECO:0000269" key="7">
    <source>
    </source>
</evidence>
<evidence type="ECO:0000303" key="8">
    <source>
    </source>
</evidence>
<evidence type="ECO:0000303" key="9">
    <source>
    </source>
</evidence>
<evidence type="ECO:0000305" key="10"/>
<evidence type="ECO:0007744" key="11">
    <source>
    </source>
</evidence>
<proteinExistence type="evidence at protein level"/>
<dbReference type="EC" id="3.6.4.13"/>
<dbReference type="EMBL" id="AK039888">
    <property type="protein sequence ID" value="BAC30474.1"/>
    <property type="molecule type" value="mRNA"/>
</dbReference>
<dbReference type="EMBL" id="BC062910">
    <property type="protein sequence ID" value="AAH62910.1"/>
    <property type="molecule type" value="mRNA"/>
</dbReference>
<dbReference type="EMBL" id="BC096036">
    <property type="protein sequence ID" value="AAH96036.1"/>
    <property type="molecule type" value="mRNA"/>
</dbReference>
<dbReference type="CCDS" id="CCDS88804.1">
    <molecule id="Q501J6-2"/>
</dbReference>
<dbReference type="CCDS" id="CCDS88805.1">
    <molecule id="Q501J6-1"/>
</dbReference>
<dbReference type="RefSeq" id="NP_001035277.1">
    <molecule id="Q501J6-1"/>
    <property type="nucleotide sequence ID" value="NM_001040187.1"/>
</dbReference>
<dbReference type="RefSeq" id="NP_951061.1">
    <molecule id="Q501J6-2"/>
    <property type="nucleotide sequence ID" value="NM_199079.2"/>
</dbReference>
<dbReference type="RefSeq" id="NP_951062.1">
    <property type="nucleotide sequence ID" value="NM_199080.2"/>
</dbReference>
<dbReference type="SMR" id="Q501J6"/>
<dbReference type="BioGRID" id="211894">
    <property type="interactions" value="57"/>
</dbReference>
<dbReference type="CORUM" id="Q501J6"/>
<dbReference type="FunCoup" id="Q501J6">
    <property type="interactions" value="4223"/>
</dbReference>
<dbReference type="IntAct" id="Q501J6">
    <property type="interactions" value="11"/>
</dbReference>
<dbReference type="MINT" id="Q501J6"/>
<dbReference type="STRING" id="10090.ENSMUSP00000055535"/>
<dbReference type="GlyGen" id="Q501J6">
    <property type="glycosylation" value="1 site, 1 O-linked glycan (1 site)"/>
</dbReference>
<dbReference type="iPTMnet" id="Q501J6"/>
<dbReference type="PhosphoSitePlus" id="Q501J6"/>
<dbReference type="SwissPalm" id="Q501J6"/>
<dbReference type="REPRODUCTION-2DPAGE" id="IPI00405364"/>
<dbReference type="jPOST" id="Q501J6"/>
<dbReference type="PaxDb" id="10090-ENSMUSP00000055535"/>
<dbReference type="PeptideAtlas" id="Q501J6"/>
<dbReference type="ProteomicsDB" id="279898">
    <molecule id="Q501J6-1"/>
</dbReference>
<dbReference type="ProteomicsDB" id="279899">
    <molecule id="Q501J6-2"/>
</dbReference>
<dbReference type="Pumba" id="Q501J6"/>
<dbReference type="Antibodypedia" id="26352">
    <property type="antibodies" value="241 antibodies from 29 providers"/>
</dbReference>
<dbReference type="DNASU" id="67040"/>
<dbReference type="Ensembl" id="ENSMUST00000229431.2">
    <molecule id="Q501J6-2"/>
    <property type="protein sequence ID" value="ENSMUSP00000155737.2"/>
    <property type="gene ID" value="ENSMUSG00000055065.8"/>
</dbReference>
<dbReference type="Ensembl" id="ENSMUST00000229877.2">
    <molecule id="Q501J6-1"/>
    <property type="protein sequence ID" value="ENSMUSP00000155307.2"/>
    <property type="gene ID" value="ENSMUSG00000055065.8"/>
</dbReference>
<dbReference type="GeneID" id="67040"/>
<dbReference type="KEGG" id="mmu:67040"/>
<dbReference type="UCSC" id="uc007wtq.1">
    <molecule id="Q501J6-1"/>
    <property type="organism name" value="mouse"/>
</dbReference>
<dbReference type="UCSC" id="uc007wtt.1">
    <molecule id="Q501J6-2"/>
    <property type="organism name" value="mouse"/>
</dbReference>
<dbReference type="AGR" id="MGI:1914290"/>
<dbReference type="CTD" id="10521"/>
<dbReference type="MGI" id="MGI:1914290">
    <property type="gene designation" value="Ddx17"/>
</dbReference>
<dbReference type="VEuPathDB" id="HostDB:ENSMUSG00000055065"/>
<dbReference type="eggNOG" id="KOG0331">
    <property type="taxonomic scope" value="Eukaryota"/>
</dbReference>
<dbReference type="GeneTree" id="ENSGT00940000160049"/>
<dbReference type="InParanoid" id="Q501J6"/>
<dbReference type="OrthoDB" id="196131at2759"/>
<dbReference type="BRENDA" id="3.6.4.13">
    <property type="organism ID" value="3474"/>
</dbReference>
<dbReference type="Reactome" id="R-MMU-3899300">
    <property type="pathway name" value="SUMOylation of transcription cofactors"/>
</dbReference>
<dbReference type="BioGRID-ORCS" id="67040">
    <property type="hits" value="6 hits in 84 CRISPR screens"/>
</dbReference>
<dbReference type="CD-CODE" id="CE726F99">
    <property type="entry name" value="Postsynaptic density"/>
</dbReference>
<dbReference type="ChiTaRS" id="Ddx17">
    <property type="organism name" value="mouse"/>
</dbReference>
<dbReference type="PRO" id="PR:Q501J6"/>
<dbReference type="Proteomes" id="UP000000589">
    <property type="component" value="Chromosome 15"/>
</dbReference>
<dbReference type="RNAct" id="Q501J6">
    <property type="molecule type" value="protein"/>
</dbReference>
<dbReference type="Bgee" id="ENSMUSG00000055065">
    <property type="expression patterns" value="Expressed in renal medulla collecting duct and 266 other cell types or tissues"/>
</dbReference>
<dbReference type="ExpressionAtlas" id="Q501J6">
    <property type="expression patterns" value="baseline and differential"/>
</dbReference>
<dbReference type="GO" id="GO:0005829">
    <property type="term" value="C:cytosol"/>
    <property type="evidence" value="ECO:0007669"/>
    <property type="project" value="UniProtKB-SubCell"/>
</dbReference>
<dbReference type="GO" id="GO:0005730">
    <property type="term" value="C:nucleolus"/>
    <property type="evidence" value="ECO:0007669"/>
    <property type="project" value="UniProtKB-SubCell"/>
</dbReference>
<dbReference type="GO" id="GO:0005524">
    <property type="term" value="F:ATP binding"/>
    <property type="evidence" value="ECO:0007669"/>
    <property type="project" value="UniProtKB-KW"/>
</dbReference>
<dbReference type="GO" id="GO:0016887">
    <property type="term" value="F:ATP hydrolysis activity"/>
    <property type="evidence" value="ECO:0007669"/>
    <property type="project" value="RHEA"/>
</dbReference>
<dbReference type="GO" id="GO:0031490">
    <property type="term" value="F:chromatin DNA binding"/>
    <property type="evidence" value="ECO:0000314"/>
    <property type="project" value="MGI"/>
</dbReference>
<dbReference type="GO" id="GO:0106222">
    <property type="term" value="F:lncRNA binding"/>
    <property type="evidence" value="ECO:0000314"/>
    <property type="project" value="MGI"/>
</dbReference>
<dbReference type="GO" id="GO:0003724">
    <property type="term" value="F:RNA helicase activity"/>
    <property type="evidence" value="ECO:0007669"/>
    <property type="project" value="UniProtKB-EC"/>
</dbReference>
<dbReference type="GO" id="GO:0000380">
    <property type="term" value="P:alternative mRNA splicing, via spliceosome"/>
    <property type="evidence" value="ECO:0000315"/>
    <property type="project" value="UniProtKB"/>
</dbReference>
<dbReference type="GO" id="GO:0030521">
    <property type="term" value="P:androgen receptor signaling pathway"/>
    <property type="evidence" value="ECO:0000250"/>
    <property type="project" value="UniProtKB"/>
</dbReference>
<dbReference type="GO" id="GO:0051607">
    <property type="term" value="P:defense response to virus"/>
    <property type="evidence" value="ECO:0007669"/>
    <property type="project" value="UniProtKB-KW"/>
</dbReference>
<dbReference type="GO" id="GO:0001837">
    <property type="term" value="P:epithelial to mesenchymal transition"/>
    <property type="evidence" value="ECO:0000250"/>
    <property type="project" value="UniProtKB"/>
</dbReference>
<dbReference type="GO" id="GO:0030520">
    <property type="term" value="P:estrogen receptor signaling pathway"/>
    <property type="evidence" value="ECO:0000250"/>
    <property type="project" value="UniProtKB"/>
</dbReference>
<dbReference type="GO" id="GO:0010467">
    <property type="term" value="P:gene expression"/>
    <property type="evidence" value="ECO:0000315"/>
    <property type="project" value="MGI"/>
</dbReference>
<dbReference type="GO" id="GO:0002376">
    <property type="term" value="P:immune system process"/>
    <property type="evidence" value="ECO:0007669"/>
    <property type="project" value="UniProtKB-KW"/>
</dbReference>
<dbReference type="GO" id="GO:0010586">
    <property type="term" value="P:miRNA metabolic process"/>
    <property type="evidence" value="ECO:0000250"/>
    <property type="project" value="UniProtKB"/>
</dbReference>
<dbReference type="GO" id="GO:0061614">
    <property type="term" value="P:miRNA transcription"/>
    <property type="evidence" value="ECO:0000315"/>
    <property type="project" value="UniProtKB"/>
</dbReference>
<dbReference type="GO" id="GO:0045445">
    <property type="term" value="P:myoblast differentiation"/>
    <property type="evidence" value="ECO:0000315"/>
    <property type="project" value="UniProtKB"/>
</dbReference>
<dbReference type="GO" id="GO:0000381">
    <property type="term" value="P:regulation of alternative mRNA splicing, via spliceosome"/>
    <property type="evidence" value="ECO:0000314"/>
    <property type="project" value="UniProtKB"/>
</dbReference>
<dbReference type="GO" id="GO:2001014">
    <property type="term" value="P:regulation of skeletal muscle cell differentiation"/>
    <property type="evidence" value="ECO:0000250"/>
    <property type="project" value="UniProtKB"/>
</dbReference>
<dbReference type="GO" id="GO:0006357">
    <property type="term" value="P:regulation of transcription by RNA polymerase II"/>
    <property type="evidence" value="ECO:0000250"/>
    <property type="project" value="UniProtKB"/>
</dbReference>
<dbReference type="GO" id="GO:0031047">
    <property type="term" value="P:regulatory ncRNA-mediated gene silencing"/>
    <property type="evidence" value="ECO:0007669"/>
    <property type="project" value="UniProtKB-KW"/>
</dbReference>
<dbReference type="GO" id="GO:0006364">
    <property type="term" value="P:rRNA processing"/>
    <property type="evidence" value="ECO:0007669"/>
    <property type="project" value="UniProtKB-KW"/>
</dbReference>
<dbReference type="CDD" id="cd18050">
    <property type="entry name" value="DEADc_DDX17"/>
    <property type="match status" value="1"/>
</dbReference>
<dbReference type="CDD" id="cd18787">
    <property type="entry name" value="SF2_C_DEAD"/>
    <property type="match status" value="1"/>
</dbReference>
<dbReference type="FunFam" id="3.40.50.300:FF:000008">
    <property type="entry name" value="ATP-dependent RNA helicase RhlB"/>
    <property type="match status" value="1"/>
</dbReference>
<dbReference type="FunFam" id="3.40.50.300:FF:000079">
    <property type="entry name" value="probable ATP-dependent RNA helicase DDX17"/>
    <property type="match status" value="1"/>
</dbReference>
<dbReference type="Gene3D" id="3.40.50.300">
    <property type="entry name" value="P-loop containing nucleotide triphosphate hydrolases"/>
    <property type="match status" value="2"/>
</dbReference>
<dbReference type="InterPro" id="IPR046330">
    <property type="entry name" value="DDX17_ATP-bd-dom"/>
</dbReference>
<dbReference type="InterPro" id="IPR011545">
    <property type="entry name" value="DEAD/DEAH_box_helicase_dom"/>
</dbReference>
<dbReference type="InterPro" id="IPR014001">
    <property type="entry name" value="Helicase_ATP-bd"/>
</dbReference>
<dbReference type="InterPro" id="IPR001650">
    <property type="entry name" value="Helicase_C-like"/>
</dbReference>
<dbReference type="InterPro" id="IPR027417">
    <property type="entry name" value="P-loop_NTPase"/>
</dbReference>
<dbReference type="InterPro" id="IPR000629">
    <property type="entry name" value="RNA-helicase_DEAD-box_CS"/>
</dbReference>
<dbReference type="InterPro" id="IPR014014">
    <property type="entry name" value="RNA_helicase_DEAD_Q_motif"/>
</dbReference>
<dbReference type="PANTHER" id="PTHR47958">
    <property type="entry name" value="ATP-DEPENDENT RNA HELICASE DBP3"/>
    <property type="match status" value="1"/>
</dbReference>
<dbReference type="Pfam" id="PF00270">
    <property type="entry name" value="DEAD"/>
    <property type="match status" value="1"/>
</dbReference>
<dbReference type="Pfam" id="PF00271">
    <property type="entry name" value="Helicase_C"/>
    <property type="match status" value="1"/>
</dbReference>
<dbReference type="SMART" id="SM00487">
    <property type="entry name" value="DEXDc"/>
    <property type="match status" value="1"/>
</dbReference>
<dbReference type="SMART" id="SM00490">
    <property type="entry name" value="HELICc"/>
    <property type="match status" value="1"/>
</dbReference>
<dbReference type="SUPFAM" id="SSF52540">
    <property type="entry name" value="P-loop containing nucleoside triphosphate hydrolases"/>
    <property type="match status" value="1"/>
</dbReference>
<dbReference type="PROSITE" id="PS00039">
    <property type="entry name" value="DEAD_ATP_HELICASE"/>
    <property type="match status" value="1"/>
</dbReference>
<dbReference type="PROSITE" id="PS51192">
    <property type="entry name" value="HELICASE_ATP_BIND_1"/>
    <property type="match status" value="1"/>
</dbReference>
<dbReference type="PROSITE" id="PS51194">
    <property type="entry name" value="HELICASE_CTER"/>
    <property type="match status" value="1"/>
</dbReference>
<dbReference type="PROSITE" id="PS51195">
    <property type="entry name" value="Q_MOTIF"/>
    <property type="match status" value="1"/>
</dbReference>